<accession>Q9P272</accession>
<accession>K7EM26</accession>
<accession>Q8N9K7</accession>
<accession>Q96AW6</accession>
<comment type="function">
    <text evidence="4">May modify wobble uridines in specific arginine and glutamic acid tRNAs. Acts as a tumor suppressor by promoting the expression of LIN9.</text>
</comment>
<comment type="alternative products">
    <event type="alternative splicing"/>
    <isoform>
        <id>Q9P272-1</id>
        <name>1</name>
        <sequence type="displayed"/>
    </isoform>
    <isoform>
        <id>Q9P272-3</id>
        <name>2</name>
        <sequence type="described" ref="VSP_059378 VSP_059379"/>
    </isoform>
</comment>
<comment type="tissue specificity">
    <text evidence="4">Down-regulated in breast, bladder, colorectal, cervix and testicular carcinomas.</text>
</comment>
<comment type="similarity">
    <text evidence="7">Belongs to the methyltransferase superfamily.</text>
</comment>
<comment type="sequence caution" evidence="7">
    <conflict type="erroneous translation">
        <sequence resource="EMBL-CDS" id="BAC04326"/>
    </conflict>
    <text>Wrong choice of frame.</text>
</comment>
<proteinExistence type="evidence at protein level"/>
<dbReference type="EC" id="2.1.1.-"/>
<dbReference type="EMBL" id="AC135352">
    <property type="status" value="NOT_ANNOTATED_CDS"/>
    <property type="molecule type" value="Genomic_DNA"/>
</dbReference>
<dbReference type="EMBL" id="AB040889">
    <property type="protein sequence ID" value="BAA95980.1"/>
    <property type="molecule type" value="mRNA"/>
</dbReference>
<dbReference type="EMBL" id="BC035082">
    <property type="status" value="NOT_ANNOTATED_CDS"/>
    <property type="molecule type" value="mRNA"/>
</dbReference>
<dbReference type="EMBL" id="AK094299">
    <property type="protein sequence ID" value="BAC04326.1"/>
    <property type="status" value="ALT_SEQ"/>
    <property type="molecule type" value="mRNA"/>
</dbReference>
<dbReference type="EMBL" id="BC016633">
    <property type="protein sequence ID" value="AAH16633.2"/>
    <property type="molecule type" value="mRNA"/>
</dbReference>
<dbReference type="CCDS" id="CCDS47808.1">
    <molecule id="Q9P272-1"/>
</dbReference>
<dbReference type="RefSeq" id="NP_065895.2">
    <molecule id="Q9P272-1"/>
    <property type="nucleotide sequence ID" value="NM_020844.3"/>
</dbReference>
<dbReference type="RefSeq" id="XP_005273643.1">
    <property type="nucleotide sequence ID" value="XM_005273586.4"/>
</dbReference>
<dbReference type="RefSeq" id="XP_016869194.1">
    <property type="nucleotide sequence ID" value="XM_017013705.1"/>
</dbReference>
<dbReference type="RefSeq" id="XP_016869195.1">
    <property type="nucleotide sequence ID" value="XM_017013706.1"/>
</dbReference>
<dbReference type="RefSeq" id="XP_016869196.1">
    <property type="nucleotide sequence ID" value="XM_017013707.1"/>
</dbReference>
<dbReference type="BioGRID" id="121652">
    <property type="interactions" value="7"/>
</dbReference>
<dbReference type="FunCoup" id="Q9P272">
    <property type="interactions" value="977"/>
</dbReference>
<dbReference type="IntAct" id="Q9P272">
    <property type="interactions" value="3"/>
</dbReference>
<dbReference type="STRING" id="9606.ENSP00000432695"/>
<dbReference type="iPTMnet" id="Q9P272"/>
<dbReference type="PhosphoSitePlus" id="Q9P272"/>
<dbReference type="BioMuta" id="KIAA1456"/>
<dbReference type="DMDM" id="269849677"/>
<dbReference type="MassIVE" id="Q9P272"/>
<dbReference type="PaxDb" id="9606-ENSP00000432695"/>
<dbReference type="PeptideAtlas" id="Q9P272"/>
<dbReference type="ProteomicsDB" id="83741">
    <molecule id="Q9P272-1"/>
</dbReference>
<dbReference type="Antibodypedia" id="58596">
    <property type="antibodies" value="56 antibodies from 16 providers"/>
</dbReference>
<dbReference type="DNASU" id="57604"/>
<dbReference type="Ensembl" id="ENST00000400069.7">
    <molecule id="Q9P272-3"/>
    <property type="protein sequence ID" value="ENSP00000468715.1"/>
    <property type="gene ID" value="ENSG00000250305.9"/>
</dbReference>
<dbReference type="Ensembl" id="ENST00000524591.7">
    <molecule id="Q9P272-1"/>
    <property type="protein sequence ID" value="ENSP00000432695.1"/>
    <property type="gene ID" value="ENSG00000250305.9"/>
</dbReference>
<dbReference type="Ensembl" id="ENST00000528753.2">
    <molecule id="Q9P272-3"/>
    <property type="protein sequence ID" value="ENSP00000466330.1"/>
    <property type="gene ID" value="ENSG00000250305.9"/>
</dbReference>
<dbReference type="Ensembl" id="ENST00000711558.1">
    <molecule id="Q9P272-3"/>
    <property type="protein sequence ID" value="ENSP00000518797.1"/>
    <property type="gene ID" value="ENSG00000284872.2"/>
</dbReference>
<dbReference type="Ensembl" id="ENST00000711559.1">
    <molecule id="Q9P272-3"/>
    <property type="protein sequence ID" value="ENSP00000518798.1"/>
    <property type="gene ID" value="ENSG00000284872.2"/>
</dbReference>
<dbReference type="GeneID" id="57604"/>
<dbReference type="KEGG" id="hsa:57604"/>
<dbReference type="MANE-Select" id="ENST00000524591.7">
    <property type="protein sequence ID" value="ENSP00000432695.1"/>
    <property type="RefSeq nucleotide sequence ID" value="NM_020844.3"/>
    <property type="RefSeq protein sequence ID" value="NP_065895.2"/>
</dbReference>
<dbReference type="UCSC" id="uc010lsq.4">
    <molecule id="Q9P272-1"/>
    <property type="organism name" value="human"/>
</dbReference>
<dbReference type="UCSC" id="uc064kkg.1">
    <property type="organism name" value="human"/>
</dbReference>
<dbReference type="AGR" id="HGNC:26725"/>
<dbReference type="CTD" id="57604"/>
<dbReference type="DisGeNET" id="57604"/>
<dbReference type="GeneCards" id="TRMT9B"/>
<dbReference type="HGNC" id="HGNC:26725">
    <property type="gene designation" value="TRMT9B"/>
</dbReference>
<dbReference type="HPA" id="ENSG00000250305">
    <property type="expression patterns" value="Group enriched (brain, choroid plexus, retina, thyroid gland)"/>
</dbReference>
<dbReference type="MIM" id="615666">
    <property type="type" value="gene"/>
</dbReference>
<dbReference type="neXtProt" id="NX_Q9P272"/>
<dbReference type="OpenTargets" id="ENSG00000250305"/>
<dbReference type="PharmGKB" id="PA143485343"/>
<dbReference type="VEuPathDB" id="HostDB:ENSG00000250305"/>
<dbReference type="eggNOG" id="KOG1331">
    <property type="taxonomic scope" value="Eukaryota"/>
</dbReference>
<dbReference type="GeneTree" id="ENSGT00940000160373"/>
<dbReference type="HOGENOM" id="CLU_029501_0_1_1"/>
<dbReference type="InParanoid" id="Q9P272"/>
<dbReference type="OMA" id="HGNWCIV"/>
<dbReference type="OrthoDB" id="271595at2759"/>
<dbReference type="PAN-GO" id="Q9P272">
    <property type="GO annotations" value="4 GO annotations based on evolutionary models"/>
</dbReference>
<dbReference type="PhylomeDB" id="Q9P272"/>
<dbReference type="PathwayCommons" id="Q9P272"/>
<dbReference type="Reactome" id="R-HSA-6782315">
    <property type="pathway name" value="tRNA modification in the nucleus and cytosol"/>
</dbReference>
<dbReference type="SignaLink" id="Q9P272"/>
<dbReference type="BioGRID-ORCS" id="57604">
    <property type="hits" value="14 hits in 1135 CRISPR screens"/>
</dbReference>
<dbReference type="GenomeRNAi" id="57604"/>
<dbReference type="Pharos" id="Q9P272">
    <property type="development level" value="Tbio"/>
</dbReference>
<dbReference type="PRO" id="PR:Q9P272"/>
<dbReference type="Proteomes" id="UP000005640">
    <property type="component" value="Chromosome 8"/>
</dbReference>
<dbReference type="RNAct" id="Q9P272">
    <property type="molecule type" value="protein"/>
</dbReference>
<dbReference type="Bgee" id="ENSG00000250305">
    <property type="expression patterns" value="Expressed in cerebellar vermis and 153 other cell types or tissues"/>
</dbReference>
<dbReference type="ExpressionAtlas" id="Q9P272">
    <property type="expression patterns" value="baseline and differential"/>
</dbReference>
<dbReference type="GO" id="GO:0005737">
    <property type="term" value="C:cytoplasm"/>
    <property type="evidence" value="ECO:0000318"/>
    <property type="project" value="GO_Central"/>
</dbReference>
<dbReference type="GO" id="GO:0005634">
    <property type="term" value="C:nucleus"/>
    <property type="evidence" value="ECO:0000318"/>
    <property type="project" value="GO_Central"/>
</dbReference>
<dbReference type="GO" id="GO:0008757">
    <property type="term" value="F:S-adenosylmethionine-dependent methyltransferase activity"/>
    <property type="evidence" value="ECO:0007669"/>
    <property type="project" value="InterPro"/>
</dbReference>
<dbReference type="GO" id="GO:0106335">
    <property type="term" value="F:tRNA (5-carboxymethyluridine(34)-5-O)-methyltransferase activity"/>
    <property type="evidence" value="ECO:0000318"/>
    <property type="project" value="GO_Central"/>
</dbReference>
<dbReference type="GO" id="GO:0000049">
    <property type="term" value="F:tRNA binding"/>
    <property type="evidence" value="ECO:0000318"/>
    <property type="project" value="GO_Central"/>
</dbReference>
<dbReference type="GO" id="GO:0008175">
    <property type="term" value="F:tRNA methyltransferase activity"/>
    <property type="evidence" value="ECO:0000269"/>
    <property type="project" value="Reactome"/>
</dbReference>
<dbReference type="GO" id="GO:0030488">
    <property type="term" value="P:tRNA methylation"/>
    <property type="evidence" value="ECO:0000318"/>
    <property type="project" value="GO_Central"/>
</dbReference>
<dbReference type="GO" id="GO:0006400">
    <property type="term" value="P:tRNA modification"/>
    <property type="evidence" value="ECO:0000304"/>
    <property type="project" value="Reactome"/>
</dbReference>
<dbReference type="GO" id="GO:0002098">
    <property type="term" value="P:tRNA wobble uridine modification"/>
    <property type="evidence" value="ECO:0000318"/>
    <property type="project" value="GO_Central"/>
</dbReference>
<dbReference type="CDD" id="cd02440">
    <property type="entry name" value="AdoMet_MTases"/>
    <property type="match status" value="1"/>
</dbReference>
<dbReference type="FunFam" id="3.40.50.150:FF:000154">
    <property type="entry name" value="Probable tRNA methyltransferase 9B"/>
    <property type="match status" value="1"/>
</dbReference>
<dbReference type="FunFam" id="3.40.50.150:FF:000214">
    <property type="entry name" value="Probable tRNA methyltransferase 9B"/>
    <property type="match status" value="1"/>
</dbReference>
<dbReference type="Gene3D" id="3.40.50.150">
    <property type="entry name" value="Vaccinia Virus protein VP39"/>
    <property type="match status" value="2"/>
</dbReference>
<dbReference type="InterPro" id="IPR051422">
    <property type="entry name" value="AlkB_tRNA_MeTrf/Diox"/>
</dbReference>
<dbReference type="InterPro" id="IPR013216">
    <property type="entry name" value="Methyltransf_11"/>
</dbReference>
<dbReference type="InterPro" id="IPR029063">
    <property type="entry name" value="SAM-dependent_MTases_sf"/>
</dbReference>
<dbReference type="PANTHER" id="PTHR13069">
    <property type="entry name" value="ALKYLATED DNA REPAIR PROTEIN ALKB HOMOLOG 8"/>
    <property type="match status" value="1"/>
</dbReference>
<dbReference type="PANTHER" id="PTHR13069:SF36">
    <property type="entry name" value="TRNA METHYLTRANSFERASE 9B-RELATED"/>
    <property type="match status" value="1"/>
</dbReference>
<dbReference type="Pfam" id="PF08241">
    <property type="entry name" value="Methyltransf_11"/>
    <property type="match status" value="1"/>
</dbReference>
<dbReference type="SUPFAM" id="SSF53335">
    <property type="entry name" value="S-adenosyl-L-methionine-dependent methyltransferases"/>
    <property type="match status" value="1"/>
</dbReference>
<organism>
    <name type="scientific">Homo sapiens</name>
    <name type="common">Human</name>
    <dbReference type="NCBI Taxonomy" id="9606"/>
    <lineage>
        <taxon>Eukaryota</taxon>
        <taxon>Metazoa</taxon>
        <taxon>Chordata</taxon>
        <taxon>Craniata</taxon>
        <taxon>Vertebrata</taxon>
        <taxon>Euteleostomi</taxon>
        <taxon>Mammalia</taxon>
        <taxon>Eutheria</taxon>
        <taxon>Euarchontoglires</taxon>
        <taxon>Primates</taxon>
        <taxon>Haplorrhini</taxon>
        <taxon>Catarrhini</taxon>
        <taxon>Hominidae</taxon>
        <taxon>Homo</taxon>
    </lineage>
</organism>
<sequence length="454" mass="51299">MDHEAAQLEKQHVHNVYESTAPYFSDLQSKAWPRVRQFLQEQKPGSLIADIGCGTGKYLKVNSQVHTVGCDYCGPLVEIARNRGCEAMVCDNLNLPFRDEGFDAIISIGVIHHFSTKQRRIRAIKEMARVLVPGGQLMIYVWAMEQKNRHFEKQDVLVPWNRALCSQLFSESSQSGRKRQCGYPERGHPYHPPCSECSCSVCFKEQCGSKRSHSVGYEPAMARTCFANISKEGEEEYGFYSTLGKSFRSWFFSRSLDESTLRKQIERVRPLKNTEVWASSTVTVQPSRHSSLDFDHQEPFSTKGQSLDEEVFVESSSGKHLEWLRAPGTLKHLNGDHQGEMRRNGGGNFLDSTNTGVNCVDAGNIEDDNPSASKILRRISAVDSTDFNPDDTMSVEDPQTDVLDSTAFMRYYHVFREGELCSLLKENVSELRILSSGNDHGNWCIIAEKKRGCD</sequence>
<name>TRM9B_HUMAN</name>
<protein>
    <recommendedName>
        <fullName evidence="7">Probable tRNA methyltransferase 9B</fullName>
    </recommendedName>
    <alternativeName>
        <fullName evidence="6">Probable tRNA methyltransferase 9-like protein</fullName>
        <ecNumber>2.1.1.-</ecNumber>
    </alternativeName>
</protein>
<feature type="chain" id="PRO_0000328792" description="Probable tRNA methyltransferase 9B">
    <location>
        <begin position="1"/>
        <end position="454"/>
    </location>
</feature>
<feature type="modified residue" description="Phosphoserine" evidence="1">
    <location>
        <position position="214"/>
    </location>
</feature>
<feature type="splice variant" id="VSP_059378" description="In isoform 2.">
    <original>CGTGKYLK</original>
    <variation>NQAASSLT</variation>
    <location>
        <begin position="53"/>
        <end position="60"/>
    </location>
</feature>
<feature type="splice variant" id="VSP_059379" description="In isoform 2.">
    <location>
        <begin position="61"/>
        <end position="454"/>
    </location>
</feature>
<feature type="sequence variant" id="VAR_077832" description="Found in a child with sporadic epilepsy; uncertain significance; dbSNP:rs757023992." evidence="5">
    <original>L</original>
    <variation>F</variation>
    <location>
        <position position="93"/>
    </location>
</feature>
<feature type="sequence variant" id="VAR_061378" description="In dbSNP:rs528255." evidence="2 3">
    <original>H</original>
    <variation>R</variation>
    <location>
        <position position="150"/>
    </location>
</feature>
<feature type="sequence variant" id="VAR_061379" description="In dbSNP:rs3739310." evidence="2 3">
    <original>C</original>
    <variation>G</variation>
    <location>
        <position position="207"/>
    </location>
</feature>
<feature type="sequence variant" id="VAR_056243" description="In dbSNP:rs505480.">
    <original>P</original>
    <variation>T</variation>
    <location>
        <position position="219"/>
    </location>
</feature>
<feature type="sequence variant" id="VAR_056244" description="In dbSNP:rs3739308.">
    <original>I</original>
    <variation>T</variation>
    <location>
        <position position="265"/>
    </location>
</feature>
<feature type="sequence variant" id="VAR_061380" description="In dbSNP:rs502882." evidence="2 3">
    <original>G</original>
    <variation>E</variation>
    <location>
        <position position="304"/>
    </location>
</feature>
<feature type="sequence variant" id="VAR_056245" description="In dbSNP:rs34995506.">
    <original>H</original>
    <variation>L</variation>
    <location>
        <position position="337"/>
    </location>
</feature>
<feature type="sequence variant" id="VAR_061381" description="In dbSNP:rs608052." evidence="2 3">
    <original>R</original>
    <variation>G</variation>
    <location>
        <position position="451"/>
    </location>
</feature>
<keyword id="KW-0025">Alternative splicing</keyword>
<keyword id="KW-0489">Methyltransferase</keyword>
<keyword id="KW-0597">Phosphoprotein</keyword>
<keyword id="KW-1267">Proteomics identification</keyword>
<keyword id="KW-1185">Reference proteome</keyword>
<keyword id="KW-0949">S-adenosyl-L-methionine</keyword>
<keyword id="KW-0808">Transferase</keyword>
<keyword id="KW-0819">tRNA processing</keyword>
<gene>
    <name evidence="8" type="primary">TRMT9B</name>
    <name type="synonym">C8orf79</name>
    <name type="synonym">KIAA1456</name>
    <name evidence="6" type="synonym">TRM9L</name>
</gene>
<evidence type="ECO:0000250" key="1">
    <source>
        <dbReference type="UniProtKB" id="Q80WQ4"/>
    </source>
</evidence>
<evidence type="ECO:0000269" key="2">
    <source>
    </source>
</evidence>
<evidence type="ECO:0000269" key="3">
    <source>
    </source>
</evidence>
<evidence type="ECO:0000269" key="4">
    <source>
    </source>
</evidence>
<evidence type="ECO:0000269" key="5">
    <source>
    </source>
</evidence>
<evidence type="ECO:0000303" key="6">
    <source>
    </source>
</evidence>
<evidence type="ECO:0000305" key="7"/>
<evidence type="ECO:0000312" key="8">
    <source>
        <dbReference type="HGNC" id="HGNC:26725"/>
    </source>
</evidence>
<reference key="1">
    <citation type="journal article" date="2006" name="Nature">
        <title>DNA sequence and analysis of human chromosome 8.</title>
        <authorList>
            <person name="Nusbaum C."/>
            <person name="Mikkelsen T.S."/>
            <person name="Zody M.C."/>
            <person name="Asakawa S."/>
            <person name="Taudien S."/>
            <person name="Garber M."/>
            <person name="Kodira C.D."/>
            <person name="Schueler M.G."/>
            <person name="Shimizu A."/>
            <person name="Whittaker C.A."/>
            <person name="Chang J.L."/>
            <person name="Cuomo C.A."/>
            <person name="Dewar K."/>
            <person name="FitzGerald M.G."/>
            <person name="Yang X."/>
            <person name="Allen N.R."/>
            <person name="Anderson S."/>
            <person name="Asakawa T."/>
            <person name="Blechschmidt K."/>
            <person name="Bloom T."/>
            <person name="Borowsky M.L."/>
            <person name="Butler J."/>
            <person name="Cook A."/>
            <person name="Corum B."/>
            <person name="DeArellano K."/>
            <person name="DeCaprio D."/>
            <person name="Dooley K.T."/>
            <person name="Dorris L. III"/>
            <person name="Engels R."/>
            <person name="Gloeckner G."/>
            <person name="Hafez N."/>
            <person name="Hagopian D.S."/>
            <person name="Hall J.L."/>
            <person name="Ishikawa S.K."/>
            <person name="Jaffe D.B."/>
            <person name="Kamat A."/>
            <person name="Kudoh J."/>
            <person name="Lehmann R."/>
            <person name="Lokitsang T."/>
            <person name="Macdonald P."/>
            <person name="Major J.E."/>
            <person name="Matthews C.D."/>
            <person name="Mauceli E."/>
            <person name="Menzel U."/>
            <person name="Mihalev A.H."/>
            <person name="Minoshima S."/>
            <person name="Murayama Y."/>
            <person name="Naylor J.W."/>
            <person name="Nicol R."/>
            <person name="Nguyen C."/>
            <person name="O'Leary S.B."/>
            <person name="O'Neill K."/>
            <person name="Parker S.C.J."/>
            <person name="Polley A."/>
            <person name="Raymond C.K."/>
            <person name="Reichwald K."/>
            <person name="Rodriguez J."/>
            <person name="Sasaki T."/>
            <person name="Schilhabel M."/>
            <person name="Siddiqui R."/>
            <person name="Smith C.L."/>
            <person name="Sneddon T.P."/>
            <person name="Talamas J.A."/>
            <person name="Tenzin P."/>
            <person name="Topham K."/>
            <person name="Venkataraman V."/>
            <person name="Wen G."/>
            <person name="Yamazaki S."/>
            <person name="Young S.K."/>
            <person name="Zeng Q."/>
            <person name="Zimmer A.R."/>
            <person name="Rosenthal A."/>
            <person name="Birren B.W."/>
            <person name="Platzer M."/>
            <person name="Shimizu N."/>
            <person name="Lander E.S."/>
        </authorList>
    </citation>
    <scope>NUCLEOTIDE SEQUENCE [LARGE SCALE GENOMIC DNA]</scope>
</reference>
<reference key="2">
    <citation type="journal article" date="2004" name="Nat. Genet.">
        <title>Complete sequencing and characterization of 21,243 full-length human cDNAs.</title>
        <authorList>
            <person name="Ota T."/>
            <person name="Suzuki Y."/>
            <person name="Nishikawa T."/>
            <person name="Otsuki T."/>
            <person name="Sugiyama T."/>
            <person name="Irie R."/>
            <person name="Wakamatsu A."/>
            <person name="Hayashi K."/>
            <person name="Sato H."/>
            <person name="Nagai K."/>
            <person name="Kimura K."/>
            <person name="Makita H."/>
            <person name="Sekine M."/>
            <person name="Obayashi M."/>
            <person name="Nishi T."/>
            <person name="Shibahara T."/>
            <person name="Tanaka T."/>
            <person name="Ishii S."/>
            <person name="Yamamoto J."/>
            <person name="Saito K."/>
            <person name="Kawai Y."/>
            <person name="Isono Y."/>
            <person name="Nakamura Y."/>
            <person name="Nagahari K."/>
            <person name="Murakami K."/>
            <person name="Yasuda T."/>
            <person name="Iwayanagi T."/>
            <person name="Wagatsuma M."/>
            <person name="Shiratori A."/>
            <person name="Sudo H."/>
            <person name="Hosoiri T."/>
            <person name="Kaku Y."/>
            <person name="Kodaira H."/>
            <person name="Kondo H."/>
            <person name="Sugawara M."/>
            <person name="Takahashi M."/>
            <person name="Kanda K."/>
            <person name="Yokoi T."/>
            <person name="Furuya T."/>
            <person name="Kikkawa E."/>
            <person name="Omura Y."/>
            <person name="Abe K."/>
            <person name="Kamihara K."/>
            <person name="Katsuta N."/>
            <person name="Sato K."/>
            <person name="Tanikawa M."/>
            <person name="Yamazaki M."/>
            <person name="Ninomiya K."/>
            <person name="Ishibashi T."/>
            <person name="Yamashita H."/>
            <person name="Murakawa K."/>
            <person name="Fujimori K."/>
            <person name="Tanai H."/>
            <person name="Kimata M."/>
            <person name="Watanabe M."/>
            <person name="Hiraoka S."/>
            <person name="Chiba Y."/>
            <person name="Ishida S."/>
            <person name="Ono Y."/>
            <person name="Takiguchi S."/>
            <person name="Watanabe S."/>
            <person name="Yosida M."/>
            <person name="Hotuta T."/>
            <person name="Kusano J."/>
            <person name="Kanehori K."/>
            <person name="Takahashi-Fujii A."/>
            <person name="Hara H."/>
            <person name="Tanase T.-O."/>
            <person name="Nomura Y."/>
            <person name="Togiya S."/>
            <person name="Komai F."/>
            <person name="Hara R."/>
            <person name="Takeuchi K."/>
            <person name="Arita M."/>
            <person name="Imose N."/>
            <person name="Musashino K."/>
            <person name="Yuuki H."/>
            <person name="Oshima A."/>
            <person name="Sasaki N."/>
            <person name="Aotsuka S."/>
            <person name="Yoshikawa Y."/>
            <person name="Matsunawa H."/>
            <person name="Ichihara T."/>
            <person name="Shiohata N."/>
            <person name="Sano S."/>
            <person name="Moriya S."/>
            <person name="Momiyama H."/>
            <person name="Satoh N."/>
            <person name="Takami S."/>
            <person name="Terashima Y."/>
            <person name="Suzuki O."/>
            <person name="Nakagawa S."/>
            <person name="Senoh A."/>
            <person name="Mizoguchi H."/>
            <person name="Goto Y."/>
            <person name="Shimizu F."/>
            <person name="Wakebe H."/>
            <person name="Hishigaki H."/>
            <person name="Watanabe T."/>
            <person name="Sugiyama A."/>
            <person name="Takemoto M."/>
            <person name="Kawakami B."/>
            <person name="Yamazaki M."/>
            <person name="Watanabe K."/>
            <person name="Kumagai A."/>
            <person name="Itakura S."/>
            <person name="Fukuzumi Y."/>
            <person name="Fujimori Y."/>
            <person name="Komiyama M."/>
            <person name="Tashiro H."/>
            <person name="Tanigami A."/>
            <person name="Fujiwara T."/>
            <person name="Ono T."/>
            <person name="Yamada K."/>
            <person name="Fujii Y."/>
            <person name="Ozaki K."/>
            <person name="Hirao M."/>
            <person name="Ohmori Y."/>
            <person name="Kawabata A."/>
            <person name="Hikiji T."/>
            <person name="Kobatake N."/>
            <person name="Inagaki H."/>
            <person name="Ikema Y."/>
            <person name="Okamoto S."/>
            <person name="Okitani R."/>
            <person name="Kawakami T."/>
            <person name="Noguchi S."/>
            <person name="Itoh T."/>
            <person name="Shigeta K."/>
            <person name="Senba T."/>
            <person name="Matsumura K."/>
            <person name="Nakajima Y."/>
            <person name="Mizuno T."/>
            <person name="Morinaga M."/>
            <person name="Sasaki M."/>
            <person name="Togashi T."/>
            <person name="Oyama M."/>
            <person name="Hata H."/>
            <person name="Watanabe M."/>
            <person name="Komatsu T."/>
            <person name="Mizushima-Sugano J."/>
            <person name="Satoh T."/>
            <person name="Shirai Y."/>
            <person name="Takahashi Y."/>
            <person name="Nakagawa K."/>
            <person name="Okumura K."/>
            <person name="Nagase T."/>
            <person name="Nomura N."/>
            <person name="Kikuchi H."/>
            <person name="Masuho Y."/>
            <person name="Yamashita R."/>
            <person name="Nakai K."/>
            <person name="Yada T."/>
            <person name="Nakamura Y."/>
            <person name="Ohara O."/>
            <person name="Isogai T."/>
            <person name="Sugano S."/>
        </authorList>
    </citation>
    <scope>NUCLEOTIDE SEQUENCE [LARGE SCALE MRNA] (ISOFORM 2)</scope>
    <source>
        <tissue>Cerebellum</tissue>
    </source>
</reference>
<reference key="3">
    <citation type="journal article" date="2000" name="DNA Res.">
        <title>Prediction of the coding sequences of unidentified human genes. XVII. The complete sequences of 100 new cDNA clones from brain which code for large proteins in vitro.</title>
        <authorList>
            <person name="Nagase T."/>
            <person name="Kikuno R."/>
            <person name="Ishikawa K."/>
            <person name="Hirosawa M."/>
            <person name="Ohara O."/>
        </authorList>
    </citation>
    <scope>NUCLEOTIDE SEQUENCE [LARGE SCALE MRNA] OF 51-454 (ISOFORM 1)</scope>
    <scope>VARIANTS ARG-150; GLY-207; GLU-304 AND GLY-451</scope>
</reference>
<reference key="4">
    <citation type="journal article" date="2004" name="Genome Res.">
        <title>The status, quality, and expansion of the NIH full-length cDNA project: the Mammalian Gene Collection (MGC).</title>
        <authorList>
            <consortium name="The MGC Project Team"/>
        </authorList>
    </citation>
    <scope>NUCLEOTIDE SEQUENCE [LARGE SCALE MRNA] OF 53-454 (ISOFORM 1)</scope>
    <scope>VARIANTS ARG-150; GLY-207; GLU-304 AND GLY-451</scope>
    <source>
        <tissue>Eye</tissue>
    </source>
</reference>
<reference key="5">
    <citation type="journal article" date="2013" name="EMBO Mol. Med.">
        <title>A human tRNA methyltransferase 9-like protein prevents tumour growth by regulating LIN9 and HIF1-alpha.</title>
        <authorList>
            <person name="Begley U."/>
            <person name="Sosa M.S."/>
            <person name="Avivar-Valderas A."/>
            <person name="Patil A."/>
            <person name="Endres L."/>
            <person name="Estrada Y."/>
            <person name="Chan C.T."/>
            <person name="Su D."/>
            <person name="Dedon P.C."/>
            <person name="Aguirre-Ghiso J.A."/>
            <person name="Begley T."/>
        </authorList>
    </citation>
    <scope>FUNCTION</scope>
    <scope>TISSUE SPECIFICITY</scope>
</reference>
<reference key="6">
    <citation type="journal article" date="2013" name="Epilepsia">
        <title>Exome sequencing reveals new causal mutations in children with epileptic encephalopathies.</title>
        <authorList>
            <person name="Veeramah K.R."/>
            <person name="Johnstone L."/>
            <person name="Karafet T.M."/>
            <person name="Wolf D."/>
            <person name="Sprissler R."/>
            <person name="Salogiannis J."/>
            <person name="Barth-Maron A."/>
            <person name="Greenberg M.E."/>
            <person name="Stuhlmann T."/>
            <person name="Weinert S."/>
            <person name="Jentsch T.J."/>
            <person name="Pazzi M."/>
            <person name="Restifo L.L."/>
            <person name="Talwar D."/>
            <person name="Erickson R.P."/>
            <person name="Hammer M.F."/>
        </authorList>
    </citation>
    <scope>VARIANT PHE-93</scope>
</reference>